<keyword id="KW-0002">3D-structure</keyword>
<keyword id="KW-0025">Alternative splicing</keyword>
<keyword id="KW-0966">Cell projection</keyword>
<keyword id="KW-0969">Cilium</keyword>
<keyword id="KW-0175">Coiled coil</keyword>
<keyword id="KW-0963">Cytoplasm</keyword>
<keyword id="KW-0206">Cytoskeleton</keyword>
<keyword id="KW-1267">Proteomics identification</keyword>
<keyword id="KW-1185">Reference proteome</keyword>
<proteinExistence type="evidence at protein level"/>
<name>CP100_HUMAN</name>
<comment type="function">
    <text evidence="1">May play a role in ciliary/flagellar motility by regulating the assembly and the activity of axonemal inner dynein arm.</text>
</comment>
<comment type="interaction">
    <interactant intactId="EBI-11953200">
        <id>Q494V2-2</id>
    </interactant>
    <interactant intactId="EBI-718729">
        <id>P55212</id>
        <label>CASP6</label>
    </interactant>
    <organismsDiffer>false</organismsDiffer>
    <experiments>3</experiments>
</comment>
<comment type="interaction">
    <interactant intactId="EBI-11953200">
        <id>Q494V2-2</id>
    </interactant>
    <interactant intactId="EBI-6624398">
        <id>P06307</id>
        <label>CCK</label>
    </interactant>
    <organismsDiffer>false</organismsDiffer>
    <experiments>3</experiments>
</comment>
<comment type="interaction">
    <interactant intactId="EBI-11953200">
        <id>Q494V2-2</id>
    </interactant>
    <interactant intactId="EBI-1053164">
        <id>O75190</id>
        <label>DNAJB6</label>
    </interactant>
    <organismsDiffer>false</organismsDiffer>
    <experiments>3</experiments>
</comment>
<comment type="interaction">
    <interactant intactId="EBI-11953200">
        <id>Q494V2-2</id>
    </interactant>
    <interactant intactId="EBI-750300">
        <id>Q01658</id>
        <label>DR1</label>
    </interactant>
    <organismsDiffer>false</organismsDiffer>
    <experiments>3</experiments>
</comment>
<comment type="interaction">
    <interactant intactId="EBI-11953200">
        <id>Q494V2-2</id>
    </interactant>
    <interactant intactId="EBI-25852354">
        <id>P11171-7</id>
        <label>EPB41</label>
    </interactant>
    <organismsDiffer>false</organismsDiffer>
    <experiments>3</experiments>
</comment>
<comment type="interaction">
    <interactant intactId="EBI-11953200">
        <id>Q494V2-2</id>
    </interactant>
    <interactant intactId="EBI-348399">
        <id>P22607</id>
        <label>FGFR3</label>
    </interactant>
    <organismsDiffer>false</organismsDiffer>
    <experiments>3</experiments>
</comment>
<comment type="interaction">
    <interactant intactId="EBI-11953200">
        <id>Q494V2-2</id>
    </interactant>
    <interactant intactId="EBI-1054873">
        <id>Q9Y5Q9</id>
        <label>GTF3C3</label>
    </interactant>
    <organismsDiffer>false</organismsDiffer>
    <experiments>3</experiments>
</comment>
<comment type="interaction">
    <interactant intactId="EBI-11953200">
        <id>Q494V2-2</id>
    </interactant>
    <interactant intactId="EBI-350145">
        <id>P01112</id>
        <label>HRAS</label>
    </interactant>
    <organismsDiffer>false</organismsDiffer>
    <experiments>3</experiments>
</comment>
<comment type="interaction">
    <interactant intactId="EBI-11953200">
        <id>Q494V2-2</id>
    </interactant>
    <interactant intactId="EBI-10975473">
        <id>O60333-2</id>
        <label>KIF1B</label>
    </interactant>
    <organismsDiffer>false</organismsDiffer>
    <experiments>3</experiments>
</comment>
<comment type="interaction">
    <interactant intactId="EBI-11953200">
        <id>Q494V2-2</id>
    </interactant>
    <interactant intactId="EBI-475646">
        <id>P07196</id>
        <label>NEFL</label>
    </interactant>
    <organismsDiffer>false</organismsDiffer>
    <experiments>3</experiments>
</comment>
<comment type="interaction">
    <interactant intactId="EBI-11953200">
        <id>Q494V2-2</id>
    </interactant>
    <interactant intactId="EBI-3908808">
        <id>O60356</id>
        <label>NUPR1</label>
    </interactant>
    <organismsDiffer>false</organismsDiffer>
    <experiments>3</experiments>
</comment>
<comment type="interaction">
    <interactant intactId="EBI-11953200">
        <id>Q494V2-2</id>
    </interactant>
    <interactant intactId="EBI-395883">
        <id>P07237</id>
        <label>P4HB</label>
    </interactant>
    <organismsDiffer>false</organismsDiffer>
    <experiments>3</experiments>
</comment>
<comment type="interaction">
    <interactant intactId="EBI-11953200">
        <id>Q494V2-2</id>
    </interactant>
    <interactant intactId="EBI-5280197">
        <id>O75400-2</id>
        <label>PRPF40A</label>
    </interactant>
    <organismsDiffer>false</organismsDiffer>
    <experiments>3</experiments>
</comment>
<comment type="interaction">
    <interactant intactId="EBI-11953200">
        <id>Q494V2-2</id>
    </interactant>
    <interactant intactId="EBI-286642">
        <id>P62826</id>
        <label>RAN</label>
    </interactant>
    <organismsDiffer>false</organismsDiffer>
    <experiments>3</experiments>
</comment>
<comment type="interaction">
    <interactant intactId="EBI-11953200">
        <id>Q494V2-2</id>
    </interactant>
    <interactant intactId="EBI-5235340">
        <id>Q7Z699</id>
        <label>SPRED1</label>
    </interactant>
    <organismsDiffer>false</organismsDiffer>
    <experiments>3</experiments>
</comment>
<comment type="interaction">
    <interactant intactId="EBI-11953200">
        <id>Q494V2-2</id>
    </interactant>
    <interactant intactId="EBI-6872807">
        <id>Q8N0S2</id>
        <label>SYCE1</label>
    </interactant>
    <organismsDiffer>false</organismsDiffer>
    <experiments>3</experiments>
</comment>
<comment type="interaction">
    <interactant intactId="EBI-11953200">
        <id>Q494V2-2</id>
    </interactant>
    <interactant intactId="EBI-372899">
        <id>Q13148</id>
        <label>TARDBP</label>
    </interactant>
    <organismsDiffer>false</organismsDiffer>
    <experiments>6</experiments>
</comment>
<comment type="interaction">
    <interactant intactId="EBI-11953200">
        <id>Q494V2-2</id>
    </interactant>
    <interactant intactId="EBI-711909">
        <id>P02766</id>
        <label>TTR</label>
    </interactant>
    <organismsDiffer>false</organismsDiffer>
    <experiments>3</experiments>
</comment>
<comment type="interaction">
    <interactant intactId="EBI-11953200">
        <id>Q494V2-2</id>
    </interactant>
    <interactant intactId="EBI-741480">
        <id>Q9UMX0</id>
        <label>UBQLN1</label>
    </interactant>
    <organismsDiffer>false</organismsDiffer>
    <experiments>3</experiments>
</comment>
<comment type="interaction">
    <interactant intactId="EBI-11953200">
        <id>Q494V2-2</id>
    </interactant>
    <interactant intactId="EBI-720609">
        <id>O76024</id>
        <label>WFS1</label>
    </interactant>
    <organismsDiffer>false</organismsDiffer>
    <experiments>3</experiments>
</comment>
<comment type="interaction">
    <interactant intactId="EBI-11953200">
        <id>Q494V2-2</id>
    </interactant>
    <interactant intactId="EBI-25900580">
        <id>Q9Y649</id>
    </interactant>
    <organismsDiffer>false</organismsDiffer>
    <experiments>3</experiments>
</comment>
<comment type="subcellular location">
    <subcellularLocation>
        <location evidence="1">Cytoplasm</location>
        <location evidence="1">Cytoskeleton</location>
        <location evidence="1">Cilium axoneme</location>
    </subcellularLocation>
</comment>
<comment type="alternative products">
    <event type="alternative splicing"/>
    <isoform>
        <id>Q494V2-1</id>
        <name>1</name>
        <sequence type="displayed"/>
    </isoform>
    <isoform>
        <id>Q494V2-2</id>
        <name>2</name>
        <sequence type="described" ref="VSP_018328"/>
    </isoform>
</comment>
<comment type="similarity">
    <text evidence="5">Belongs to the CFAP100 family.</text>
</comment>
<dbReference type="EMBL" id="AK097402">
    <property type="protein sequence ID" value="BAC05035.1"/>
    <property type="molecule type" value="mRNA"/>
</dbReference>
<dbReference type="EMBL" id="CH471052">
    <property type="protein sequence ID" value="EAW79363.1"/>
    <property type="molecule type" value="Genomic_DNA"/>
</dbReference>
<dbReference type="EMBL" id="CH471052">
    <property type="protein sequence ID" value="EAW79364.1"/>
    <property type="molecule type" value="Genomic_DNA"/>
</dbReference>
<dbReference type="EMBL" id="BC101366">
    <property type="protein sequence ID" value="AAI01367.1"/>
    <property type="molecule type" value="mRNA"/>
</dbReference>
<dbReference type="EMBL" id="BC101367">
    <property type="protein sequence ID" value="AAI01368.2"/>
    <property type="molecule type" value="mRNA"/>
</dbReference>
<dbReference type="EMBL" id="BC101368">
    <property type="protein sequence ID" value="AAI01369.1"/>
    <property type="molecule type" value="mRNA"/>
</dbReference>
<dbReference type="EMBL" id="BC101369">
    <property type="protein sequence ID" value="AAI01370.1"/>
    <property type="molecule type" value="mRNA"/>
</dbReference>
<dbReference type="CCDS" id="CCDS3037.1">
    <molecule id="Q494V2-1"/>
</dbReference>
<dbReference type="RefSeq" id="NP_872434.2">
    <molecule id="Q494V2-1"/>
    <property type="nucleotide sequence ID" value="NM_182628.3"/>
</dbReference>
<dbReference type="RefSeq" id="XP_006713686.1">
    <property type="nucleotide sequence ID" value="XM_006713623.2"/>
</dbReference>
<dbReference type="PDB" id="8J07">
    <property type="method" value="EM"/>
    <property type="resolution" value="4.10 A"/>
    <property type="chains" value="j4=1-611"/>
</dbReference>
<dbReference type="PDBsum" id="8J07"/>
<dbReference type="EMDB" id="EMD-35888"/>
<dbReference type="SMR" id="Q494V2"/>
<dbReference type="BioGRID" id="131533">
    <property type="interactions" value="10"/>
</dbReference>
<dbReference type="FunCoup" id="Q494V2">
    <property type="interactions" value="58"/>
</dbReference>
<dbReference type="IntAct" id="Q494V2">
    <property type="interactions" value="27"/>
</dbReference>
<dbReference type="MINT" id="Q494V2"/>
<dbReference type="STRING" id="9606.ENSP00000344749"/>
<dbReference type="GlyGen" id="Q494V2">
    <property type="glycosylation" value="3 sites, 1 O-linked glycan (1 site)"/>
</dbReference>
<dbReference type="iPTMnet" id="Q494V2"/>
<dbReference type="PhosphoSitePlus" id="Q494V2"/>
<dbReference type="BioMuta" id="CFAP100"/>
<dbReference type="DMDM" id="97045019"/>
<dbReference type="jPOST" id="Q494V2"/>
<dbReference type="MassIVE" id="Q494V2"/>
<dbReference type="PaxDb" id="9606-ENSP00000344749"/>
<dbReference type="PeptideAtlas" id="Q494V2"/>
<dbReference type="ProteomicsDB" id="61941">
    <molecule id="Q494V2-1"/>
</dbReference>
<dbReference type="ProteomicsDB" id="61942">
    <molecule id="Q494V2-2"/>
</dbReference>
<dbReference type="Antibodypedia" id="46637">
    <property type="antibodies" value="141 antibodies from 20 providers"/>
</dbReference>
<dbReference type="DNASU" id="348807"/>
<dbReference type="Ensembl" id="ENST00000352312.6">
    <molecule id="Q494V2-1"/>
    <property type="protein sequence ID" value="ENSP00000344749.1"/>
    <property type="gene ID" value="ENSG00000163885.12"/>
</dbReference>
<dbReference type="Ensembl" id="ENST00000505024.1">
    <molecule id="Q494V2-2"/>
    <property type="protein sequence ID" value="ENSP00000423046.1"/>
    <property type="gene ID" value="ENSG00000163885.12"/>
</dbReference>
<dbReference type="GeneID" id="348807"/>
<dbReference type="KEGG" id="hsa:348807"/>
<dbReference type="MANE-Select" id="ENST00000352312.6">
    <property type="protein sequence ID" value="ENSP00000344749.1"/>
    <property type="RefSeq nucleotide sequence ID" value="NM_182628.3"/>
    <property type="RefSeq protein sequence ID" value="NP_872434.2"/>
</dbReference>
<dbReference type="UCSC" id="uc003eiu.1">
    <molecule id="Q494V2-1"/>
    <property type="organism name" value="human"/>
</dbReference>
<dbReference type="AGR" id="HGNC:26842"/>
<dbReference type="CTD" id="348807"/>
<dbReference type="DisGeNET" id="348807"/>
<dbReference type="GeneCards" id="CFAP100"/>
<dbReference type="HGNC" id="HGNC:26842">
    <property type="gene designation" value="CFAP100"/>
</dbReference>
<dbReference type="HPA" id="ENSG00000163885">
    <property type="expression patterns" value="Tissue enhanced (choroid plexus, fallopian tube, testis)"/>
</dbReference>
<dbReference type="neXtProt" id="NX_Q494V2"/>
<dbReference type="OpenTargets" id="ENSG00000163885"/>
<dbReference type="PharmGKB" id="PA142672192"/>
<dbReference type="VEuPathDB" id="HostDB:ENSG00000163885"/>
<dbReference type="eggNOG" id="ENOG502QSDI">
    <property type="taxonomic scope" value="Eukaryota"/>
</dbReference>
<dbReference type="GeneTree" id="ENSGT00940000153110"/>
<dbReference type="HOGENOM" id="CLU_026271_0_1_1"/>
<dbReference type="InParanoid" id="Q494V2"/>
<dbReference type="OMA" id="AWKLSMT"/>
<dbReference type="OrthoDB" id="10264063at2759"/>
<dbReference type="PAN-GO" id="Q494V2">
    <property type="GO annotations" value="1 GO annotation based on evolutionary models"/>
</dbReference>
<dbReference type="PhylomeDB" id="Q494V2"/>
<dbReference type="TreeFam" id="TF328835"/>
<dbReference type="PathwayCommons" id="Q494V2"/>
<dbReference type="SignaLink" id="Q494V2"/>
<dbReference type="BioGRID-ORCS" id="348807">
    <property type="hits" value="5 hits in 1134 CRISPR screens"/>
</dbReference>
<dbReference type="ChiTaRS" id="CFAP100">
    <property type="organism name" value="human"/>
</dbReference>
<dbReference type="GenomeRNAi" id="348807"/>
<dbReference type="Pharos" id="Q494V2">
    <property type="development level" value="Tbio"/>
</dbReference>
<dbReference type="PRO" id="PR:Q494V2"/>
<dbReference type="Proteomes" id="UP000005640">
    <property type="component" value="Chromosome 3"/>
</dbReference>
<dbReference type="RNAct" id="Q494V2">
    <property type="molecule type" value="protein"/>
</dbReference>
<dbReference type="Bgee" id="ENSG00000163885">
    <property type="expression patterns" value="Expressed in right uterine tube and 128 other cell types or tissues"/>
</dbReference>
<dbReference type="ExpressionAtlas" id="Q494V2">
    <property type="expression patterns" value="baseline and differential"/>
</dbReference>
<dbReference type="GO" id="GO:0097545">
    <property type="term" value="C:axonemal doublet microtubule"/>
    <property type="evidence" value="ECO:0000250"/>
    <property type="project" value="UniProtKB"/>
</dbReference>
<dbReference type="GO" id="GO:0036064">
    <property type="term" value="C:ciliary basal body"/>
    <property type="evidence" value="ECO:0000314"/>
    <property type="project" value="GO_Central"/>
</dbReference>
<dbReference type="GO" id="GO:0031514">
    <property type="term" value="C:motile cilium"/>
    <property type="evidence" value="ECO:0000250"/>
    <property type="project" value="UniProtKB"/>
</dbReference>
<dbReference type="GO" id="GO:0070840">
    <property type="term" value="F:dynein complex binding"/>
    <property type="evidence" value="ECO:0000250"/>
    <property type="project" value="UniProtKB"/>
</dbReference>
<dbReference type="GO" id="GO:0003341">
    <property type="term" value="P:cilium movement"/>
    <property type="evidence" value="ECO:0000250"/>
    <property type="project" value="UniProtKB"/>
</dbReference>
<dbReference type="GO" id="GO:0036159">
    <property type="term" value="P:inner dynein arm assembly"/>
    <property type="evidence" value="ECO:0000250"/>
    <property type="project" value="UniProtKB"/>
</dbReference>
<dbReference type="InterPro" id="IPR051147">
    <property type="entry name" value="CFAP_domain-containing"/>
</dbReference>
<dbReference type="InterPro" id="IPR025252">
    <property type="entry name" value="DUF4200"/>
</dbReference>
<dbReference type="PANTHER" id="PTHR21683:SF5">
    <property type="entry name" value="CILIA- AND FLAGELLA-ASSOCIATED PROTEIN 100"/>
    <property type="match status" value="1"/>
</dbReference>
<dbReference type="PANTHER" id="PTHR21683">
    <property type="entry name" value="COILED-COIL DOMAIN-CONTAINING PROTEIN 42 LIKE-2-LIKE-RELATED"/>
    <property type="match status" value="1"/>
</dbReference>
<dbReference type="Pfam" id="PF13863">
    <property type="entry name" value="DUF4200"/>
    <property type="match status" value="1"/>
</dbReference>
<organism>
    <name type="scientific">Homo sapiens</name>
    <name type="common">Human</name>
    <dbReference type="NCBI Taxonomy" id="9606"/>
    <lineage>
        <taxon>Eukaryota</taxon>
        <taxon>Metazoa</taxon>
        <taxon>Chordata</taxon>
        <taxon>Craniata</taxon>
        <taxon>Vertebrata</taxon>
        <taxon>Euteleostomi</taxon>
        <taxon>Mammalia</taxon>
        <taxon>Eutheria</taxon>
        <taxon>Euarchontoglires</taxon>
        <taxon>Primates</taxon>
        <taxon>Haplorrhini</taxon>
        <taxon>Catarrhini</taxon>
        <taxon>Hominidae</taxon>
        <taxon>Homo</taxon>
    </lineage>
</organism>
<reference key="1">
    <citation type="journal article" date="2004" name="Nat. Genet.">
        <title>Complete sequencing and characterization of 21,243 full-length human cDNAs.</title>
        <authorList>
            <person name="Ota T."/>
            <person name="Suzuki Y."/>
            <person name="Nishikawa T."/>
            <person name="Otsuki T."/>
            <person name="Sugiyama T."/>
            <person name="Irie R."/>
            <person name="Wakamatsu A."/>
            <person name="Hayashi K."/>
            <person name="Sato H."/>
            <person name="Nagai K."/>
            <person name="Kimura K."/>
            <person name="Makita H."/>
            <person name="Sekine M."/>
            <person name="Obayashi M."/>
            <person name="Nishi T."/>
            <person name="Shibahara T."/>
            <person name="Tanaka T."/>
            <person name="Ishii S."/>
            <person name="Yamamoto J."/>
            <person name="Saito K."/>
            <person name="Kawai Y."/>
            <person name="Isono Y."/>
            <person name="Nakamura Y."/>
            <person name="Nagahari K."/>
            <person name="Murakami K."/>
            <person name="Yasuda T."/>
            <person name="Iwayanagi T."/>
            <person name="Wagatsuma M."/>
            <person name="Shiratori A."/>
            <person name="Sudo H."/>
            <person name="Hosoiri T."/>
            <person name="Kaku Y."/>
            <person name="Kodaira H."/>
            <person name="Kondo H."/>
            <person name="Sugawara M."/>
            <person name="Takahashi M."/>
            <person name="Kanda K."/>
            <person name="Yokoi T."/>
            <person name="Furuya T."/>
            <person name="Kikkawa E."/>
            <person name="Omura Y."/>
            <person name="Abe K."/>
            <person name="Kamihara K."/>
            <person name="Katsuta N."/>
            <person name="Sato K."/>
            <person name="Tanikawa M."/>
            <person name="Yamazaki M."/>
            <person name="Ninomiya K."/>
            <person name="Ishibashi T."/>
            <person name="Yamashita H."/>
            <person name="Murakawa K."/>
            <person name="Fujimori K."/>
            <person name="Tanai H."/>
            <person name="Kimata M."/>
            <person name="Watanabe M."/>
            <person name="Hiraoka S."/>
            <person name="Chiba Y."/>
            <person name="Ishida S."/>
            <person name="Ono Y."/>
            <person name="Takiguchi S."/>
            <person name="Watanabe S."/>
            <person name="Yosida M."/>
            <person name="Hotuta T."/>
            <person name="Kusano J."/>
            <person name="Kanehori K."/>
            <person name="Takahashi-Fujii A."/>
            <person name="Hara H."/>
            <person name="Tanase T.-O."/>
            <person name="Nomura Y."/>
            <person name="Togiya S."/>
            <person name="Komai F."/>
            <person name="Hara R."/>
            <person name="Takeuchi K."/>
            <person name="Arita M."/>
            <person name="Imose N."/>
            <person name="Musashino K."/>
            <person name="Yuuki H."/>
            <person name="Oshima A."/>
            <person name="Sasaki N."/>
            <person name="Aotsuka S."/>
            <person name="Yoshikawa Y."/>
            <person name="Matsunawa H."/>
            <person name="Ichihara T."/>
            <person name="Shiohata N."/>
            <person name="Sano S."/>
            <person name="Moriya S."/>
            <person name="Momiyama H."/>
            <person name="Satoh N."/>
            <person name="Takami S."/>
            <person name="Terashima Y."/>
            <person name="Suzuki O."/>
            <person name="Nakagawa S."/>
            <person name="Senoh A."/>
            <person name="Mizoguchi H."/>
            <person name="Goto Y."/>
            <person name="Shimizu F."/>
            <person name="Wakebe H."/>
            <person name="Hishigaki H."/>
            <person name="Watanabe T."/>
            <person name="Sugiyama A."/>
            <person name="Takemoto M."/>
            <person name="Kawakami B."/>
            <person name="Yamazaki M."/>
            <person name="Watanabe K."/>
            <person name="Kumagai A."/>
            <person name="Itakura S."/>
            <person name="Fukuzumi Y."/>
            <person name="Fujimori Y."/>
            <person name="Komiyama M."/>
            <person name="Tashiro H."/>
            <person name="Tanigami A."/>
            <person name="Fujiwara T."/>
            <person name="Ono T."/>
            <person name="Yamada K."/>
            <person name="Fujii Y."/>
            <person name="Ozaki K."/>
            <person name="Hirao M."/>
            <person name="Ohmori Y."/>
            <person name="Kawabata A."/>
            <person name="Hikiji T."/>
            <person name="Kobatake N."/>
            <person name="Inagaki H."/>
            <person name="Ikema Y."/>
            <person name="Okamoto S."/>
            <person name="Okitani R."/>
            <person name="Kawakami T."/>
            <person name="Noguchi S."/>
            <person name="Itoh T."/>
            <person name="Shigeta K."/>
            <person name="Senba T."/>
            <person name="Matsumura K."/>
            <person name="Nakajima Y."/>
            <person name="Mizuno T."/>
            <person name="Morinaga M."/>
            <person name="Sasaki M."/>
            <person name="Togashi T."/>
            <person name="Oyama M."/>
            <person name="Hata H."/>
            <person name="Watanabe M."/>
            <person name="Komatsu T."/>
            <person name="Mizushima-Sugano J."/>
            <person name="Satoh T."/>
            <person name="Shirai Y."/>
            <person name="Takahashi Y."/>
            <person name="Nakagawa K."/>
            <person name="Okumura K."/>
            <person name="Nagase T."/>
            <person name="Nomura N."/>
            <person name="Kikuchi H."/>
            <person name="Masuho Y."/>
            <person name="Yamashita R."/>
            <person name="Nakai K."/>
            <person name="Yada T."/>
            <person name="Nakamura Y."/>
            <person name="Ohara O."/>
            <person name="Isogai T."/>
            <person name="Sugano S."/>
        </authorList>
    </citation>
    <scope>NUCLEOTIDE SEQUENCE [LARGE SCALE MRNA] (ISOFORM 1)</scope>
    <source>
        <tissue>Testis</tissue>
    </source>
</reference>
<reference key="2">
    <citation type="submission" date="2005-09" db="EMBL/GenBank/DDBJ databases">
        <authorList>
            <person name="Mural R.J."/>
            <person name="Istrail S."/>
            <person name="Sutton G.G."/>
            <person name="Florea L."/>
            <person name="Halpern A.L."/>
            <person name="Mobarry C.M."/>
            <person name="Lippert R."/>
            <person name="Walenz B."/>
            <person name="Shatkay H."/>
            <person name="Dew I."/>
            <person name="Miller J.R."/>
            <person name="Flanigan M.J."/>
            <person name="Edwards N.J."/>
            <person name="Bolanos R."/>
            <person name="Fasulo D."/>
            <person name="Halldorsson B.V."/>
            <person name="Hannenhalli S."/>
            <person name="Turner R."/>
            <person name="Yooseph S."/>
            <person name="Lu F."/>
            <person name="Nusskern D.R."/>
            <person name="Shue B.C."/>
            <person name="Zheng X.H."/>
            <person name="Zhong F."/>
            <person name="Delcher A.L."/>
            <person name="Huson D.H."/>
            <person name="Kravitz S.A."/>
            <person name="Mouchard L."/>
            <person name="Reinert K."/>
            <person name="Remington K.A."/>
            <person name="Clark A.G."/>
            <person name="Waterman M.S."/>
            <person name="Eichler E.E."/>
            <person name="Adams M.D."/>
            <person name="Hunkapiller M.W."/>
            <person name="Myers E.W."/>
            <person name="Venter J.C."/>
        </authorList>
    </citation>
    <scope>NUCLEOTIDE SEQUENCE [LARGE SCALE GENOMIC DNA]</scope>
</reference>
<reference key="3">
    <citation type="journal article" date="2004" name="Genome Res.">
        <title>The status, quality, and expansion of the NIH full-length cDNA project: the Mammalian Gene Collection (MGC).</title>
        <authorList>
            <consortium name="The MGC Project Team"/>
        </authorList>
    </citation>
    <scope>NUCLEOTIDE SEQUENCE [LARGE SCALE MRNA] (ISOFORMS 1 AND 2)</scope>
</reference>
<protein>
    <recommendedName>
        <fullName evidence="5">Cilia- and flagella-associated protein 100</fullName>
    </recommendedName>
    <alternativeName>
        <fullName evidence="5">Coiled-coil domain-containing protein 37</fullName>
    </alternativeName>
</protein>
<sequence length="611" mass="71117">MSEIPSTIVSKNMTNDKNSLESMNISSSSSTEENPKKQARKNEEHGPDPSANPFHLSGDVDFFLLRDQERNKALSERQQQKTMRVHQKMTYSSKVSAKHTSLRRQLQLEDKQEDLEARAEAEHQRAFRDYTTWKLTLTKEKNVEPENMSGYIKQKRQMFLLQYALDVKRREIQRLETLATKEEARLERAEKSLEKDAALFDEFVRENDCSSVQAMRAAEKETKAKIEKILEIRDLTTQIVNIKSEISRFEDTLKHYKVYKDFLYKLSPKEWLEEQEKKHSFLKKAKEVSEASKESSVNSTPGDKGPGIKGKASSMWAKEGQGTKKPWRFLQTMRLGRSPSYLSSPQQGSQPSESSGGDSRGSNSPIPPTQEDTDSDGEEPQLYFTEPQQLLDVFRELEEQNLSLIQNSQETEKTLEELSHTLKHTQIRMDREVNQLKQWVTTMMMSITKEEDTAAELELKARVFHFGEYKGDQQDKLLESLNCKVLDVYRHCTGTQQEANLGTVQMLTIIEHQLDELLENLEHVPQVKIEQAERAKEKERRIRLREEKLQMQKILQEEHLQRARARAQAEIKKKRGRTLVCRSRPPAHRIKQQSEHTLMDKEEEELLFFFT</sequence>
<gene>
    <name evidence="6" type="primary">CFAP100</name>
    <name evidence="6" type="synonym">CCDC37</name>
</gene>
<evidence type="ECO:0000250" key="1">
    <source>
        <dbReference type="UniProtKB" id="A8I4E9"/>
    </source>
</evidence>
<evidence type="ECO:0000255" key="2"/>
<evidence type="ECO:0000256" key="3">
    <source>
        <dbReference type="SAM" id="MobiDB-lite"/>
    </source>
</evidence>
<evidence type="ECO:0000303" key="4">
    <source>
    </source>
</evidence>
<evidence type="ECO:0000305" key="5"/>
<evidence type="ECO:0000312" key="6">
    <source>
        <dbReference type="HGNC" id="HGNC:26842"/>
    </source>
</evidence>
<accession>Q494V2</accession>
<accession>D3DNA8</accession>
<accession>Q494V1</accession>
<accession>Q494V4</accession>
<accession>Q8N838</accession>
<feature type="chain" id="PRO_0000234487" description="Cilia- and flagella-associated protein 100">
    <location>
        <begin position="1"/>
        <end position="611"/>
    </location>
</feature>
<feature type="region of interest" description="Disordered" evidence="3">
    <location>
        <begin position="1"/>
        <end position="57"/>
    </location>
</feature>
<feature type="region of interest" description="Disordered" evidence="3">
    <location>
        <begin position="287"/>
        <end position="323"/>
    </location>
</feature>
<feature type="region of interest" description="Disordered" evidence="3">
    <location>
        <begin position="338"/>
        <end position="380"/>
    </location>
</feature>
<feature type="coiled-coil region" evidence="2">
    <location>
        <begin position="101"/>
        <end position="128"/>
    </location>
</feature>
<feature type="coiled-coil region" evidence="2">
    <location>
        <begin position="164"/>
        <end position="203"/>
    </location>
</feature>
<feature type="coiled-coil region" evidence="2">
    <location>
        <begin position="230"/>
        <end position="257"/>
    </location>
</feature>
<feature type="coiled-coil region" evidence="2">
    <location>
        <begin position="393"/>
        <end position="432"/>
    </location>
</feature>
<feature type="coiled-coil region" evidence="2">
    <location>
        <begin position="526"/>
        <end position="578"/>
    </location>
</feature>
<feature type="compositionally biased region" description="Polar residues" evidence="3">
    <location>
        <begin position="1"/>
        <end position="17"/>
    </location>
</feature>
<feature type="compositionally biased region" description="Low complexity" evidence="3">
    <location>
        <begin position="20"/>
        <end position="32"/>
    </location>
</feature>
<feature type="compositionally biased region" description="Basic and acidic residues" evidence="3">
    <location>
        <begin position="33"/>
        <end position="47"/>
    </location>
</feature>
<feature type="compositionally biased region" description="Low complexity" evidence="3">
    <location>
        <begin position="338"/>
        <end position="357"/>
    </location>
</feature>
<feature type="splice variant" id="VSP_018328" description="In isoform 2." evidence="4">
    <original>K</original>
    <variation>KA</variation>
    <location>
        <position position="139"/>
    </location>
</feature>
<feature type="sequence conflict" description="In Ref. 1; BAC05035." evidence="5" ref="1">
    <original>K</original>
    <variation>E</variation>
    <location>
        <position position="36"/>
    </location>
</feature>
<feature type="sequence conflict" description="In Ref. 1; BAC05035." evidence="5" ref="1">
    <original>S</original>
    <variation>G</variation>
    <location>
        <position position="244"/>
    </location>
</feature>
<feature type="sequence conflict" description="In Ref. 3; AAI01370/AAI01368." evidence="5" ref="3">
    <location>
        <position position="412"/>
    </location>
</feature>